<gene>
    <name evidence="14" type="primary">AADAT</name>
    <name evidence="14" type="synonym">KAT2</name>
    <name evidence="14" type="synonym">KYAT2</name>
</gene>
<evidence type="ECO:0000250" key="1">
    <source>
        <dbReference type="UniProtKB" id="Q64602"/>
    </source>
</evidence>
<evidence type="ECO:0000250" key="2">
    <source>
        <dbReference type="UniProtKB" id="Q9WVM8"/>
    </source>
</evidence>
<evidence type="ECO:0000255" key="3"/>
<evidence type="ECO:0000256" key="4">
    <source>
        <dbReference type="SAM" id="MobiDB-lite"/>
    </source>
</evidence>
<evidence type="ECO:0000269" key="5">
    <source>
    </source>
</evidence>
<evidence type="ECO:0000269" key="6">
    <source>
    </source>
</evidence>
<evidence type="ECO:0000269" key="7">
    <source>
    </source>
</evidence>
<evidence type="ECO:0000269" key="8">
    <source>
    </source>
</evidence>
<evidence type="ECO:0000303" key="9">
    <source>
    </source>
</evidence>
<evidence type="ECO:0000305" key="10"/>
<evidence type="ECO:0000305" key="11">
    <source>
    </source>
</evidence>
<evidence type="ECO:0000305" key="12">
    <source>
    </source>
</evidence>
<evidence type="ECO:0000305" key="13">
    <source>
    </source>
</evidence>
<evidence type="ECO:0000312" key="14">
    <source>
        <dbReference type="HGNC" id="HGNC:17929"/>
    </source>
</evidence>
<evidence type="ECO:0007829" key="15">
    <source>
        <dbReference type="PDB" id="2R2N"/>
    </source>
</evidence>
<evidence type="ECO:0007829" key="16">
    <source>
        <dbReference type="PDB" id="3UE8"/>
    </source>
</evidence>
<evidence type="ECO:0007829" key="17">
    <source>
        <dbReference type="PDB" id="4GE7"/>
    </source>
</evidence>
<evidence type="ECO:0007829" key="18">
    <source>
        <dbReference type="PDB" id="4GE9"/>
    </source>
</evidence>
<evidence type="ECO:0007829" key="19">
    <source>
        <dbReference type="PDB" id="4GEB"/>
    </source>
</evidence>
<evidence type="ECO:0007829" key="20">
    <source>
        <dbReference type="PDB" id="5TF5"/>
    </source>
</evidence>
<evidence type="ECO:0007829" key="21">
    <source>
        <dbReference type="PDB" id="6D0A"/>
    </source>
</evidence>
<evidence type="ECO:0007829" key="22">
    <source>
        <dbReference type="PDB" id="6T8P"/>
    </source>
</evidence>
<accession>Q8N5Z0</accession>
<accession>B3KP84</accession>
<accession>Q9UL02</accession>
<organism>
    <name type="scientific">Homo sapiens</name>
    <name type="common">Human</name>
    <dbReference type="NCBI Taxonomy" id="9606"/>
    <lineage>
        <taxon>Eukaryota</taxon>
        <taxon>Metazoa</taxon>
        <taxon>Chordata</taxon>
        <taxon>Craniata</taxon>
        <taxon>Vertebrata</taxon>
        <taxon>Euteleostomi</taxon>
        <taxon>Mammalia</taxon>
        <taxon>Eutheria</taxon>
        <taxon>Euarchontoglires</taxon>
        <taxon>Primates</taxon>
        <taxon>Haplorrhini</taxon>
        <taxon>Catarrhini</taxon>
        <taxon>Hominidae</taxon>
        <taxon>Homo</taxon>
    </lineage>
</organism>
<keyword id="KW-0002">3D-structure</keyword>
<keyword id="KW-0007">Acetylation</keyword>
<keyword id="KW-0025">Alternative splicing</keyword>
<keyword id="KW-0032">Aminotransferase</keyword>
<keyword id="KW-0496">Mitochondrion</keyword>
<keyword id="KW-1267">Proteomics identification</keyword>
<keyword id="KW-0663">Pyridoxal phosphate</keyword>
<keyword id="KW-1185">Reference proteome</keyword>
<keyword id="KW-0808">Transferase</keyword>
<keyword id="KW-0809">Transit peptide</keyword>
<comment type="function">
    <text evidence="5 6 8">Transaminase with broad substrate specificity. Has transaminase activity towards aminoadipate, kynurenine, methionine and glutamate. Shows activity also towards tryptophan, aspartate and hydroxykynurenine. Accepts a variety of oxo-acids as amino-group acceptors, with a preference for 2-oxoglutarate, 2-oxocaproic acid, phenylpyruvate and alpha-oxo-gamma-methiol butyric acid. Can also use glyoxylate as amino-group acceptor (in vitro).</text>
</comment>
<comment type="catalytic activity">
    <reaction evidence="8">
        <text>glycine + 2-oxoglutarate = glyoxylate + L-glutamate</text>
        <dbReference type="Rhea" id="RHEA:14089"/>
        <dbReference type="ChEBI" id="CHEBI:16810"/>
        <dbReference type="ChEBI" id="CHEBI:29985"/>
        <dbReference type="ChEBI" id="CHEBI:36655"/>
        <dbReference type="ChEBI" id="CHEBI:57305"/>
        <dbReference type="EC" id="2.6.1.4"/>
    </reaction>
</comment>
<comment type="catalytic activity">
    <reaction evidence="6 8">
        <text>L-kynurenine + 2-oxoglutarate = kynurenate + L-glutamate + H2O</text>
        <dbReference type="Rhea" id="RHEA:65560"/>
        <dbReference type="ChEBI" id="CHEBI:15377"/>
        <dbReference type="ChEBI" id="CHEBI:16810"/>
        <dbReference type="ChEBI" id="CHEBI:29985"/>
        <dbReference type="ChEBI" id="CHEBI:57959"/>
        <dbReference type="ChEBI" id="CHEBI:58454"/>
        <dbReference type="EC" id="2.6.1.7"/>
    </reaction>
    <physiologicalReaction direction="left-to-right" evidence="12 13">
        <dbReference type="Rhea" id="RHEA:65561"/>
    </physiologicalReaction>
</comment>
<comment type="catalytic activity">
    <reaction evidence="8">
        <text>L-kynurenine + glyoxylate = kynurenate + glycine + H2O</text>
        <dbReference type="Rhea" id="RHEA:65896"/>
        <dbReference type="ChEBI" id="CHEBI:15377"/>
        <dbReference type="ChEBI" id="CHEBI:36655"/>
        <dbReference type="ChEBI" id="CHEBI:57305"/>
        <dbReference type="ChEBI" id="CHEBI:57959"/>
        <dbReference type="ChEBI" id="CHEBI:58454"/>
        <dbReference type="EC" id="2.6.1.63"/>
    </reaction>
    <physiologicalReaction direction="left-to-right" evidence="13">
        <dbReference type="Rhea" id="RHEA:65897"/>
    </physiologicalReaction>
</comment>
<comment type="catalytic activity">
    <reaction evidence="8">
        <text>3-hydroxy-L-kynurenine + glyoxylate = xanthurenate + glycine + H2O</text>
        <dbReference type="Rhea" id="RHEA:65900"/>
        <dbReference type="ChEBI" id="CHEBI:15377"/>
        <dbReference type="ChEBI" id="CHEBI:36655"/>
        <dbReference type="ChEBI" id="CHEBI:57305"/>
        <dbReference type="ChEBI" id="CHEBI:58125"/>
        <dbReference type="ChEBI" id="CHEBI:71201"/>
        <dbReference type="EC" id="2.6.1.63"/>
    </reaction>
</comment>
<comment type="catalytic activity">
    <reaction evidence="8">
        <text>2-oxohexanoate + L-kynurenine = L-2-aminohexanoate + kynurenate + H2O</text>
        <dbReference type="Rhea" id="RHEA:66060"/>
        <dbReference type="ChEBI" id="CHEBI:15377"/>
        <dbReference type="ChEBI" id="CHEBI:35177"/>
        <dbReference type="ChEBI" id="CHEBI:57959"/>
        <dbReference type="ChEBI" id="CHEBI:58454"/>
        <dbReference type="ChEBI" id="CHEBI:58455"/>
    </reaction>
    <physiologicalReaction direction="left-to-right" evidence="13">
        <dbReference type="Rhea" id="RHEA:66061"/>
    </physiologicalReaction>
</comment>
<comment type="catalytic activity">
    <reaction evidence="8">
        <text>3-phenylpyruvate + L-kynurenine = kynurenate + L-phenylalanine + H2O</text>
        <dbReference type="Rhea" id="RHEA:66092"/>
        <dbReference type="ChEBI" id="CHEBI:15377"/>
        <dbReference type="ChEBI" id="CHEBI:18005"/>
        <dbReference type="ChEBI" id="CHEBI:57959"/>
        <dbReference type="ChEBI" id="CHEBI:58095"/>
        <dbReference type="ChEBI" id="CHEBI:58454"/>
    </reaction>
    <physiologicalReaction direction="left-to-right" evidence="13">
        <dbReference type="Rhea" id="RHEA:66093"/>
    </physiologicalReaction>
</comment>
<comment type="catalytic activity">
    <reaction evidence="8">
        <text>4-methylsulfanyl-2-oxobutanoate + L-kynurenine = kynurenate + L-methionine + H2O</text>
        <dbReference type="Rhea" id="RHEA:69096"/>
        <dbReference type="ChEBI" id="CHEBI:15377"/>
        <dbReference type="ChEBI" id="CHEBI:16723"/>
        <dbReference type="ChEBI" id="CHEBI:57844"/>
        <dbReference type="ChEBI" id="CHEBI:57959"/>
        <dbReference type="ChEBI" id="CHEBI:58454"/>
    </reaction>
    <physiologicalReaction direction="left-to-right" evidence="13">
        <dbReference type="Rhea" id="RHEA:69097"/>
    </physiologicalReaction>
</comment>
<comment type="catalytic activity">
    <reaction evidence="8">
        <text>2-oxo-3-sulfanylpropanoate + L-kynurenine = kynurenate + L-cysteine + H2O</text>
        <dbReference type="Rhea" id="RHEA:69104"/>
        <dbReference type="ChEBI" id="CHEBI:15377"/>
        <dbReference type="ChEBI" id="CHEBI:35235"/>
        <dbReference type="ChEBI" id="CHEBI:57678"/>
        <dbReference type="ChEBI" id="CHEBI:57959"/>
        <dbReference type="ChEBI" id="CHEBI:58454"/>
    </reaction>
    <physiologicalReaction direction="left-to-right" evidence="13">
        <dbReference type="Rhea" id="RHEA:69105"/>
    </physiologicalReaction>
</comment>
<comment type="catalytic activity">
    <reaction evidence="8">
        <text>indole-3-pyruvate + L-kynurenine = kynurenate + L-tryptophan + H2O</text>
        <dbReference type="Rhea" id="RHEA:66052"/>
        <dbReference type="ChEBI" id="CHEBI:15377"/>
        <dbReference type="ChEBI" id="CHEBI:17640"/>
        <dbReference type="ChEBI" id="CHEBI:57912"/>
        <dbReference type="ChEBI" id="CHEBI:57959"/>
        <dbReference type="ChEBI" id="CHEBI:58454"/>
    </reaction>
    <physiologicalReaction direction="left-to-right" evidence="13">
        <dbReference type="Rhea" id="RHEA:66053"/>
    </physiologicalReaction>
</comment>
<comment type="catalytic activity">
    <reaction evidence="8">
        <text>2-oxopentanoate + L-kynurenine = L-2-aminopentanoate + kynurenate + H2O</text>
        <dbReference type="Rhea" id="RHEA:66076"/>
        <dbReference type="ChEBI" id="CHEBI:15377"/>
        <dbReference type="ChEBI" id="CHEBI:28644"/>
        <dbReference type="ChEBI" id="CHEBI:57959"/>
        <dbReference type="ChEBI" id="CHEBI:58441"/>
        <dbReference type="ChEBI" id="CHEBI:58454"/>
    </reaction>
    <physiologicalReaction direction="left-to-right" evidence="13">
        <dbReference type="Rhea" id="RHEA:66077"/>
    </physiologicalReaction>
</comment>
<comment type="catalytic activity">
    <reaction evidence="8">
        <text>4-methyl-2-oxopentanoate + L-kynurenine = kynurenate + L-leucine + H2O</text>
        <dbReference type="Rhea" id="RHEA:66068"/>
        <dbReference type="ChEBI" id="CHEBI:15377"/>
        <dbReference type="ChEBI" id="CHEBI:17865"/>
        <dbReference type="ChEBI" id="CHEBI:57427"/>
        <dbReference type="ChEBI" id="CHEBI:57959"/>
        <dbReference type="ChEBI" id="CHEBI:58454"/>
    </reaction>
    <physiologicalReaction direction="left-to-right" evidence="13">
        <dbReference type="Rhea" id="RHEA:66069"/>
    </physiologicalReaction>
</comment>
<comment type="catalytic activity">
    <reaction evidence="5 8">
        <text>L-2-aminoadipate + 2-oxoglutarate = 2-oxoadipate + L-glutamate</text>
        <dbReference type="Rhea" id="RHEA:12601"/>
        <dbReference type="ChEBI" id="CHEBI:16810"/>
        <dbReference type="ChEBI" id="CHEBI:29985"/>
        <dbReference type="ChEBI" id="CHEBI:57499"/>
        <dbReference type="ChEBI" id="CHEBI:58672"/>
        <dbReference type="EC" id="2.6.1.39"/>
    </reaction>
    <physiologicalReaction direction="left-to-right" evidence="11">
        <dbReference type="Rhea" id="RHEA:12602"/>
    </physiologicalReaction>
</comment>
<comment type="catalytic activity">
    <reaction evidence="8">
        <text>glyoxylate + L-methionine = 4-methylsulfanyl-2-oxobutanoate + glycine</text>
        <dbReference type="Rhea" id="RHEA:22884"/>
        <dbReference type="ChEBI" id="CHEBI:16723"/>
        <dbReference type="ChEBI" id="CHEBI:36655"/>
        <dbReference type="ChEBI" id="CHEBI:57305"/>
        <dbReference type="ChEBI" id="CHEBI:57844"/>
        <dbReference type="EC" id="2.6.1.73"/>
    </reaction>
</comment>
<comment type="catalytic activity">
    <reaction evidence="8">
        <text>L-2-aminoadipate + glyoxylate = 2-oxoadipate + glycine</text>
        <dbReference type="Rhea" id="RHEA:69112"/>
        <dbReference type="ChEBI" id="CHEBI:36655"/>
        <dbReference type="ChEBI" id="CHEBI:57305"/>
        <dbReference type="ChEBI" id="CHEBI:57499"/>
        <dbReference type="ChEBI" id="CHEBI:58672"/>
    </reaction>
    <physiologicalReaction direction="left-to-right" evidence="13">
        <dbReference type="Rhea" id="RHEA:69113"/>
    </physiologicalReaction>
</comment>
<comment type="catalytic activity">
    <reaction evidence="8">
        <text>L-tyrosine + glyoxylate = 3-(4-hydroxyphenyl)pyruvate + glycine</text>
        <dbReference type="Rhea" id="RHEA:69116"/>
        <dbReference type="ChEBI" id="CHEBI:36242"/>
        <dbReference type="ChEBI" id="CHEBI:36655"/>
        <dbReference type="ChEBI" id="CHEBI:57305"/>
        <dbReference type="ChEBI" id="CHEBI:58315"/>
    </reaction>
</comment>
<comment type="catalytic activity">
    <reaction evidence="8">
        <text>glyoxylate + L-phenylalanine = 3-phenylpyruvate + glycine</text>
        <dbReference type="Rhea" id="RHEA:69120"/>
        <dbReference type="ChEBI" id="CHEBI:18005"/>
        <dbReference type="ChEBI" id="CHEBI:36655"/>
        <dbReference type="ChEBI" id="CHEBI:57305"/>
        <dbReference type="ChEBI" id="CHEBI:58095"/>
    </reaction>
</comment>
<comment type="catalytic activity">
    <reaction evidence="8">
        <text>L-tryptophan + glyoxylate = indole-3-pyruvate + glycine</text>
        <dbReference type="Rhea" id="RHEA:69124"/>
        <dbReference type="ChEBI" id="CHEBI:17640"/>
        <dbReference type="ChEBI" id="CHEBI:36655"/>
        <dbReference type="ChEBI" id="CHEBI:57305"/>
        <dbReference type="ChEBI" id="CHEBI:57912"/>
    </reaction>
</comment>
<comment type="catalytic activity">
    <reaction evidence="8">
        <text>L-leucine + glyoxylate = 4-methyl-2-oxopentanoate + glycine</text>
        <dbReference type="Rhea" id="RHEA:69128"/>
        <dbReference type="ChEBI" id="CHEBI:17865"/>
        <dbReference type="ChEBI" id="CHEBI:36655"/>
        <dbReference type="ChEBI" id="CHEBI:57305"/>
        <dbReference type="ChEBI" id="CHEBI:57427"/>
    </reaction>
</comment>
<comment type="catalytic activity">
    <reaction evidence="1">
        <text>2-oxobutanoate + L-kynurenine = (2S)-2-aminobutanoate + kynurenate + H2O</text>
        <dbReference type="Rhea" id="RHEA:66044"/>
        <dbReference type="ChEBI" id="CHEBI:15377"/>
        <dbReference type="ChEBI" id="CHEBI:16763"/>
        <dbReference type="ChEBI" id="CHEBI:57959"/>
        <dbReference type="ChEBI" id="CHEBI:58454"/>
        <dbReference type="ChEBI" id="CHEBI:74359"/>
    </reaction>
    <physiologicalReaction direction="left-to-right" evidence="1">
        <dbReference type="Rhea" id="RHEA:66045"/>
    </physiologicalReaction>
</comment>
<comment type="catalytic activity">
    <reaction evidence="1">
        <text>2-oxoadipate + L-kynurenine = L-2-aminoadipate + kynurenate + H2O</text>
        <dbReference type="Rhea" id="RHEA:70047"/>
        <dbReference type="ChEBI" id="CHEBI:15377"/>
        <dbReference type="ChEBI" id="CHEBI:57499"/>
        <dbReference type="ChEBI" id="CHEBI:57959"/>
        <dbReference type="ChEBI" id="CHEBI:58454"/>
        <dbReference type="ChEBI" id="CHEBI:58672"/>
    </reaction>
    <physiologicalReaction direction="left-to-right" evidence="1">
        <dbReference type="Rhea" id="RHEA:70048"/>
    </physiologicalReaction>
</comment>
<comment type="cofactor">
    <cofactor evidence="5 6 7">
        <name>pyridoxal 5'-phosphate</name>
        <dbReference type="ChEBI" id="CHEBI:597326"/>
    </cofactor>
</comment>
<comment type="activity regulation">
    <text evidence="8">Kynurenine transaminase activity is competitively inhibited by aminoadipate, asparagine, glutamate, histidine, cysteine, lysine, 3-hydroxy-kynurenine and phenylalanine.</text>
</comment>
<comment type="biophysicochemical properties">
    <kinetics>
        <KM evidence="8">0.9 mM for aminoadipate</KM>
        <KM evidence="8">4.7 mM for kynurenine</KM>
        <KM evidence="8">1.7 mM for methionine</KM>
        <KM evidence="8">1.6 mM for glutamate</KM>
        <KM evidence="8">1.8 mM for tyrosine</KM>
        <KM evidence="8">1.2 mM for 2-oxoglutarate</KM>
        <KM evidence="8">1.5 mM for 2-oxocaproic acid</KM>
        <KM evidence="8">1.8 mM for phenylpyruvate</KM>
        <KM evidence="8">1.4 mM for ino-3-pyruvate</KM>
    </kinetics>
    <phDependence>
        <text evidence="8">Optimum pH is 7-9.</text>
    </phDependence>
    <temperatureDependence>
        <text evidence="8">Optimum temperature is 50 degrees Celsius.</text>
    </temperatureDependence>
</comment>
<comment type="pathway">
    <text>Amino-acid degradation; L-lysine degradation via saccharopine pathway; glutaryl-CoA from L-lysine: step 4/6.</text>
</comment>
<comment type="subunit">
    <text evidence="6 7 8">Homodimer.</text>
</comment>
<comment type="subcellular location">
    <subcellularLocation>
        <location evidence="10">Mitochondrion</location>
    </subcellularLocation>
</comment>
<comment type="alternative products">
    <event type="alternative splicing"/>
    <isoform>
        <id>Q8N5Z0-1</id>
        <name>1</name>
        <sequence type="displayed"/>
    </isoform>
    <isoform>
        <id>Q8N5Z0-2</id>
        <name>2</name>
        <sequence type="described" ref="VSP_009874"/>
    </isoform>
</comment>
<comment type="tissue specificity">
    <text>Higher expression in the liver. Also found in heart, brain, kidney, pancreas, prostate, testis and ovary.</text>
</comment>
<comment type="miscellaneous">
    <molecule>Isoform 1</molecule>
    <text>May be due to a competing donor splice site.</text>
</comment>
<comment type="similarity">
    <text evidence="10">Belongs to the class-I pyridoxal-phosphate-dependent aminotransferase family.</text>
</comment>
<sequence length="425" mass="47352">MNYARFITAASAARNPSPIRTMTDILSRGPKSMISLAGGLPNPNMFPFKTAVITVENGKTIQFGEEMMKRALQYSPSAGIPELLSWLKQLQIKLHNPPTIHYPPSQGQMDLCVTSGSQQGLCKVFEMIINPGDNVLLDEPAYSGTLQSLHPLGCNIINVASDESGIVPDSLRDILSRWKPEDAKNPQKNTPKFLYTVPNGNNPTGNSLTSERKKEIYELARKYDFLIIEDDPYYFLQFNKFRVPTFLSMDVDGRVIRADSFSKIISSGLRIGFLTGPKPLIERVILHIQVSTLHPSTFNQLMISQLLHEWGEEGFMAHVDRVIDFYSNQKDAILAAADKWLTGLAEWHVPAAGMFLWIKVKGINDVKELIEEKAVKMGVLMLPGNAFYVDSSAPSPYLRASFSSASPEQMDVAFQVLAQLIKESL</sequence>
<reference key="1">
    <citation type="submission" date="1998-10" db="EMBL/GenBank/DDBJ databases">
        <title>Cloning of human L-kynurenine/alpha-aminoadipate aminotransferase cDNA from brain tissue.</title>
        <authorList>
            <person name="Gatti S."/>
            <person name="Breton J."/>
            <person name="Mostardini M."/>
            <person name="Mosca M."/>
            <person name="Tarroni P."/>
            <person name="Schwarcz R."/>
            <person name="Speciale C."/>
            <person name="Okuno E."/>
            <person name="Toma S."/>
            <person name="Benatti L."/>
        </authorList>
    </citation>
    <scope>NUCLEOTIDE SEQUENCE [MRNA] (ISOFORM 1)</scope>
    <source>
        <tissue>Brain</tissue>
    </source>
</reference>
<reference key="2">
    <citation type="journal article" date="2002" name="Mol. Genet. Metab.">
        <title>Characterization of the human gene encoding alpha-aminoadipate aminotransferase (AADAT).</title>
        <authorList>
            <person name="Goh D.L.M."/>
            <person name="Patel A."/>
            <person name="Thomas G.H."/>
            <person name="Salomons G.S."/>
            <person name="Schor D.S.M."/>
            <person name="Jakobs C."/>
            <person name="Geraghty M.T."/>
        </authorList>
    </citation>
    <scope>NUCLEOTIDE SEQUENCE [MRNA] (ISOFORM 1)</scope>
    <scope>FUNCTION</scope>
    <scope>CATALYTIC ACTIVITY</scope>
    <scope>COFACTOR</scope>
</reference>
<reference key="3">
    <citation type="journal article" date="2004" name="Nat. Genet.">
        <title>Complete sequencing and characterization of 21,243 full-length human cDNAs.</title>
        <authorList>
            <person name="Ota T."/>
            <person name="Suzuki Y."/>
            <person name="Nishikawa T."/>
            <person name="Otsuki T."/>
            <person name="Sugiyama T."/>
            <person name="Irie R."/>
            <person name="Wakamatsu A."/>
            <person name="Hayashi K."/>
            <person name="Sato H."/>
            <person name="Nagai K."/>
            <person name="Kimura K."/>
            <person name="Makita H."/>
            <person name="Sekine M."/>
            <person name="Obayashi M."/>
            <person name="Nishi T."/>
            <person name="Shibahara T."/>
            <person name="Tanaka T."/>
            <person name="Ishii S."/>
            <person name="Yamamoto J."/>
            <person name="Saito K."/>
            <person name="Kawai Y."/>
            <person name="Isono Y."/>
            <person name="Nakamura Y."/>
            <person name="Nagahari K."/>
            <person name="Murakami K."/>
            <person name="Yasuda T."/>
            <person name="Iwayanagi T."/>
            <person name="Wagatsuma M."/>
            <person name="Shiratori A."/>
            <person name="Sudo H."/>
            <person name="Hosoiri T."/>
            <person name="Kaku Y."/>
            <person name="Kodaira H."/>
            <person name="Kondo H."/>
            <person name="Sugawara M."/>
            <person name="Takahashi M."/>
            <person name="Kanda K."/>
            <person name="Yokoi T."/>
            <person name="Furuya T."/>
            <person name="Kikkawa E."/>
            <person name="Omura Y."/>
            <person name="Abe K."/>
            <person name="Kamihara K."/>
            <person name="Katsuta N."/>
            <person name="Sato K."/>
            <person name="Tanikawa M."/>
            <person name="Yamazaki M."/>
            <person name="Ninomiya K."/>
            <person name="Ishibashi T."/>
            <person name="Yamashita H."/>
            <person name="Murakawa K."/>
            <person name="Fujimori K."/>
            <person name="Tanai H."/>
            <person name="Kimata M."/>
            <person name="Watanabe M."/>
            <person name="Hiraoka S."/>
            <person name="Chiba Y."/>
            <person name="Ishida S."/>
            <person name="Ono Y."/>
            <person name="Takiguchi S."/>
            <person name="Watanabe S."/>
            <person name="Yosida M."/>
            <person name="Hotuta T."/>
            <person name="Kusano J."/>
            <person name="Kanehori K."/>
            <person name="Takahashi-Fujii A."/>
            <person name="Hara H."/>
            <person name="Tanase T.-O."/>
            <person name="Nomura Y."/>
            <person name="Togiya S."/>
            <person name="Komai F."/>
            <person name="Hara R."/>
            <person name="Takeuchi K."/>
            <person name="Arita M."/>
            <person name="Imose N."/>
            <person name="Musashino K."/>
            <person name="Yuuki H."/>
            <person name="Oshima A."/>
            <person name="Sasaki N."/>
            <person name="Aotsuka S."/>
            <person name="Yoshikawa Y."/>
            <person name="Matsunawa H."/>
            <person name="Ichihara T."/>
            <person name="Shiohata N."/>
            <person name="Sano S."/>
            <person name="Moriya S."/>
            <person name="Momiyama H."/>
            <person name="Satoh N."/>
            <person name="Takami S."/>
            <person name="Terashima Y."/>
            <person name="Suzuki O."/>
            <person name="Nakagawa S."/>
            <person name="Senoh A."/>
            <person name="Mizoguchi H."/>
            <person name="Goto Y."/>
            <person name="Shimizu F."/>
            <person name="Wakebe H."/>
            <person name="Hishigaki H."/>
            <person name="Watanabe T."/>
            <person name="Sugiyama A."/>
            <person name="Takemoto M."/>
            <person name="Kawakami B."/>
            <person name="Yamazaki M."/>
            <person name="Watanabe K."/>
            <person name="Kumagai A."/>
            <person name="Itakura S."/>
            <person name="Fukuzumi Y."/>
            <person name="Fujimori Y."/>
            <person name="Komiyama M."/>
            <person name="Tashiro H."/>
            <person name="Tanigami A."/>
            <person name="Fujiwara T."/>
            <person name="Ono T."/>
            <person name="Yamada K."/>
            <person name="Fujii Y."/>
            <person name="Ozaki K."/>
            <person name="Hirao M."/>
            <person name="Ohmori Y."/>
            <person name="Kawabata A."/>
            <person name="Hikiji T."/>
            <person name="Kobatake N."/>
            <person name="Inagaki H."/>
            <person name="Ikema Y."/>
            <person name="Okamoto S."/>
            <person name="Okitani R."/>
            <person name="Kawakami T."/>
            <person name="Noguchi S."/>
            <person name="Itoh T."/>
            <person name="Shigeta K."/>
            <person name="Senba T."/>
            <person name="Matsumura K."/>
            <person name="Nakajima Y."/>
            <person name="Mizuno T."/>
            <person name="Morinaga M."/>
            <person name="Sasaki M."/>
            <person name="Togashi T."/>
            <person name="Oyama M."/>
            <person name="Hata H."/>
            <person name="Watanabe M."/>
            <person name="Komatsu T."/>
            <person name="Mizushima-Sugano J."/>
            <person name="Satoh T."/>
            <person name="Shirai Y."/>
            <person name="Takahashi Y."/>
            <person name="Nakagawa K."/>
            <person name="Okumura K."/>
            <person name="Nagase T."/>
            <person name="Nomura N."/>
            <person name="Kikuchi H."/>
            <person name="Masuho Y."/>
            <person name="Yamashita R."/>
            <person name="Nakai K."/>
            <person name="Yada T."/>
            <person name="Nakamura Y."/>
            <person name="Ohara O."/>
            <person name="Isogai T."/>
            <person name="Sugano S."/>
        </authorList>
    </citation>
    <scope>NUCLEOTIDE SEQUENCE [LARGE SCALE MRNA] (ISOFORM 1)</scope>
</reference>
<reference key="4">
    <citation type="journal article" date="2004" name="Genome Res.">
        <title>The status, quality, and expansion of the NIH full-length cDNA project: the Mammalian Gene Collection (MGC).</title>
        <authorList>
            <consortium name="The MGC Project Team"/>
        </authorList>
    </citation>
    <scope>NUCLEOTIDE SEQUENCE [LARGE SCALE MRNA] (ISOFORM 2)</scope>
    <source>
        <tissue>Brain</tissue>
    </source>
</reference>
<reference key="5">
    <citation type="journal article" date="2014" name="J. Proteomics">
        <title>An enzyme assisted RP-RPLC approach for in-depth analysis of human liver phosphoproteome.</title>
        <authorList>
            <person name="Bian Y."/>
            <person name="Song C."/>
            <person name="Cheng K."/>
            <person name="Dong M."/>
            <person name="Wang F."/>
            <person name="Huang J."/>
            <person name="Sun D."/>
            <person name="Wang L."/>
            <person name="Ye M."/>
            <person name="Zou H."/>
        </authorList>
    </citation>
    <scope>IDENTIFICATION BY MASS SPECTROMETRY [LARGE SCALE ANALYSIS]</scope>
    <source>
        <tissue>Liver</tissue>
    </source>
</reference>
<reference key="6">
    <citation type="journal article" date="2008" name="Biosci. Rep.">
        <title>Substrate specificity and structure of human aminoadipate aminotransferase/kynurenine aminotransferase II.</title>
        <authorList>
            <person name="Han Q."/>
            <person name="Cai T."/>
            <person name="Tagle D.A."/>
            <person name="Robinson H."/>
            <person name="Li J."/>
        </authorList>
    </citation>
    <scope>X-RAY CRYSTALLOGRAPHY (2.5 ANGSTROMS) IN COMPLEX WITH 2-OXOGLUTARATE</scope>
    <scope>CATALYTIC ACTIVITY</scope>
    <scope>BIOPHYSICOCHEMICAL PROPERTIES</scope>
    <scope>ACTIVITY REGULATION</scope>
    <scope>SUBUNIT</scope>
    <scope>FUNCTION</scope>
</reference>
<reference key="7">
    <citation type="journal article" date="2008" name="J. Biol. Chem.">
        <title>Crystal structure of human kynurenine aminotransferase II.</title>
        <authorList>
            <person name="Han Q."/>
            <person name="Robinson H."/>
            <person name="Li J."/>
        </authorList>
    </citation>
    <scope>X-RAY CRYSTALLOGRAPHY (1.95 ANGSTROMS) IN COMPLEX WITH PYRIDOXAL PHOSPHATE AND KYRUNENINE</scope>
    <scope>CATALYTIC ACTIVITY</scope>
    <scope>FUNCTION</scope>
    <scope>COFACTOR</scope>
    <scope>SUBUNIT</scope>
</reference>
<reference key="8">
    <citation type="journal article" date="2008" name="J. Biol. Chem.">
        <title>Crystal structure of human kynurenine aminotransferase II, a drug target for the treatment of schizophrenia.</title>
        <authorList>
            <person name="Rossi F."/>
            <person name="Garavaglia S."/>
            <person name="Montalbano V."/>
            <person name="Walsh M.A."/>
            <person name="Rizzi M."/>
        </authorList>
    </citation>
    <scope>X-RAY CRYSTALLOGRAPHY (2.3 ANGSTROMS) IN COMPLEX WITH PYRIDOXAL PHOSPHATE</scope>
    <scope>SUBUNIT</scope>
    <scope>COFACTOR</scope>
</reference>
<feature type="transit peptide" description="Mitochondrion" evidence="3">
    <location>
        <begin position="1"/>
        <end position="29"/>
    </location>
</feature>
<feature type="chain" id="PRO_0000020602" description="Kynurenine/alpha-aminoadipate aminotransferase, mitochondrial">
    <location>
        <begin position="30"/>
        <end position="425"/>
    </location>
</feature>
<feature type="region of interest" description="Disordered" evidence="4">
    <location>
        <begin position="181"/>
        <end position="208"/>
    </location>
</feature>
<feature type="compositionally biased region" description="Polar residues" evidence="4">
    <location>
        <begin position="198"/>
        <end position="208"/>
    </location>
</feature>
<feature type="binding site">
    <location>
        <position position="20"/>
    </location>
    <ligand>
        <name>substrate</name>
    </ligand>
</feature>
<feature type="binding site">
    <location>
        <position position="74"/>
    </location>
    <ligand>
        <name>substrate</name>
    </ligand>
</feature>
<feature type="binding site">
    <location>
        <position position="142"/>
    </location>
    <ligand>
        <name>substrate</name>
    </ligand>
</feature>
<feature type="binding site">
    <location>
        <position position="202"/>
    </location>
    <ligand>
        <name>substrate</name>
    </ligand>
</feature>
<feature type="binding site">
    <location>
        <position position="399"/>
    </location>
    <ligand>
        <name>substrate</name>
    </ligand>
</feature>
<feature type="modified residue" description="N6-acetyllysine" evidence="2">
    <location>
        <position position="69"/>
    </location>
</feature>
<feature type="modified residue" description="N6-acetyllysine" evidence="2">
    <location>
        <position position="179"/>
    </location>
</feature>
<feature type="modified residue" description="N6-(pyridoxal phosphate)lysine; alternate">
    <location>
        <position position="263"/>
    </location>
</feature>
<feature type="modified residue" description="N6-acetyllysine; alternate" evidence="2">
    <location>
        <position position="263"/>
    </location>
</feature>
<feature type="modified residue" description="N6-succinyllysine; alternate" evidence="2">
    <location>
        <position position="263"/>
    </location>
</feature>
<feature type="modified residue" description="N6-acetyllysine; alternate" evidence="2">
    <location>
        <position position="339"/>
    </location>
</feature>
<feature type="modified residue" description="N6-succinyllysine; alternate" evidence="2">
    <location>
        <position position="339"/>
    </location>
</feature>
<feature type="modified residue" description="N6-acetyllysine; alternate" evidence="2">
    <location>
        <position position="367"/>
    </location>
</feature>
<feature type="modified residue" description="N6-succinyllysine; alternate" evidence="2">
    <location>
        <position position="367"/>
    </location>
</feature>
<feature type="modified residue" description="N6-acetyllysine" evidence="2">
    <location>
        <position position="422"/>
    </location>
</feature>
<feature type="splice variant" id="VSP_009874" description="In isoform 2." evidence="9">
    <original>T</original>
    <variation>SEKRA</variation>
    <location>
        <position position="23"/>
    </location>
</feature>
<feature type="sequence variant" id="VAR_061005" description="In dbSNP:rs56350236.">
    <original>V</original>
    <variation>I</variation>
    <location>
        <position position="243"/>
    </location>
</feature>
<feature type="sequence conflict" description="In Ref. 4; AAH31068." evidence="10" ref="4">
    <original>P</original>
    <variation>Q</variation>
    <location>
        <position position="103"/>
    </location>
</feature>
<feature type="sequence conflict" description="In Ref. 3; BAG51596." evidence="10" ref="3">
    <original>L</original>
    <variation>S</variation>
    <location>
        <position position="380"/>
    </location>
</feature>
<feature type="helix" evidence="21">
    <location>
        <begin position="3"/>
        <end position="6"/>
    </location>
</feature>
<feature type="helix" evidence="21">
    <location>
        <begin position="9"/>
        <end position="13"/>
    </location>
</feature>
<feature type="helix" evidence="15">
    <location>
        <begin position="19"/>
        <end position="21"/>
    </location>
</feature>
<feature type="helix" evidence="21">
    <location>
        <begin position="23"/>
        <end position="27"/>
    </location>
</feature>
<feature type="helix" evidence="21">
    <location>
        <begin position="43"/>
        <end position="45"/>
    </location>
</feature>
<feature type="strand" evidence="21">
    <location>
        <begin position="51"/>
        <end position="53"/>
    </location>
</feature>
<feature type="turn" evidence="19">
    <location>
        <begin position="56"/>
        <end position="58"/>
    </location>
</feature>
<feature type="strand" evidence="21">
    <location>
        <begin position="61"/>
        <end position="63"/>
    </location>
</feature>
<feature type="helix" evidence="21">
    <location>
        <begin position="65"/>
        <end position="71"/>
    </location>
</feature>
<feature type="helix" evidence="21">
    <location>
        <begin position="81"/>
        <end position="95"/>
    </location>
</feature>
<feature type="turn" evidence="21">
    <location>
        <begin position="98"/>
        <end position="101"/>
    </location>
</feature>
<feature type="helix" evidence="21">
    <location>
        <begin position="104"/>
        <end position="106"/>
    </location>
</feature>
<feature type="strand" evidence="21">
    <location>
        <begin position="109"/>
        <end position="116"/>
    </location>
</feature>
<feature type="helix" evidence="21">
    <location>
        <begin position="117"/>
        <end position="128"/>
    </location>
</feature>
<feature type="strand" evidence="21">
    <location>
        <begin position="134"/>
        <end position="137"/>
    </location>
</feature>
<feature type="helix" evidence="21">
    <location>
        <begin position="143"/>
        <end position="149"/>
    </location>
</feature>
<feature type="helix" evidence="21">
    <location>
        <begin position="150"/>
        <end position="152"/>
    </location>
</feature>
<feature type="strand" evidence="21">
    <location>
        <begin position="155"/>
        <end position="158"/>
    </location>
</feature>
<feature type="helix" evidence="21">
    <location>
        <begin position="168"/>
        <end position="175"/>
    </location>
</feature>
<feature type="helix" evidence="21">
    <location>
        <begin position="180"/>
        <end position="184"/>
    </location>
</feature>
<feature type="helix" evidence="21">
    <location>
        <begin position="186"/>
        <end position="188"/>
    </location>
</feature>
<feature type="strand" evidence="21">
    <location>
        <begin position="193"/>
        <end position="196"/>
    </location>
</feature>
<feature type="turn" evidence="21">
    <location>
        <begin position="202"/>
        <end position="204"/>
    </location>
</feature>
<feature type="helix" evidence="21">
    <location>
        <begin position="210"/>
        <end position="223"/>
    </location>
</feature>
<feature type="strand" evidence="21">
    <location>
        <begin position="226"/>
        <end position="230"/>
    </location>
</feature>
<feature type="turn" evidence="21">
    <location>
        <begin position="232"/>
        <end position="235"/>
    </location>
</feature>
<feature type="strand" evidence="21">
    <location>
        <begin position="239"/>
        <end position="241"/>
    </location>
</feature>
<feature type="helix" evidence="21">
    <location>
        <begin position="247"/>
        <end position="249"/>
    </location>
</feature>
<feature type="strand" evidence="20">
    <location>
        <begin position="251"/>
        <end position="253"/>
    </location>
</feature>
<feature type="strand" evidence="21">
    <location>
        <begin position="255"/>
        <end position="261"/>
    </location>
</feature>
<feature type="turn" evidence="21">
    <location>
        <begin position="262"/>
        <end position="265"/>
    </location>
</feature>
<feature type="turn" evidence="18">
    <location>
        <begin position="267"/>
        <end position="270"/>
    </location>
</feature>
<feature type="strand" evidence="21">
    <location>
        <begin position="272"/>
        <end position="277"/>
    </location>
</feature>
<feature type="helix" evidence="21">
    <location>
        <begin position="278"/>
        <end position="289"/>
    </location>
</feature>
<feature type="turn" evidence="21">
    <location>
        <begin position="290"/>
        <end position="292"/>
    </location>
</feature>
<feature type="strand" evidence="17">
    <location>
        <begin position="293"/>
        <end position="295"/>
    </location>
</feature>
<feature type="helix" evidence="21">
    <location>
        <begin position="297"/>
        <end position="340"/>
    </location>
</feature>
<feature type="turn" evidence="21">
    <location>
        <begin position="341"/>
        <end position="344"/>
    </location>
</feature>
<feature type="strand" evidence="21">
    <location>
        <begin position="345"/>
        <end position="347"/>
    </location>
</feature>
<feature type="strand" evidence="21">
    <location>
        <begin position="351"/>
        <end position="360"/>
    </location>
</feature>
<feature type="helix" evidence="21">
    <location>
        <begin position="368"/>
        <end position="371"/>
    </location>
</feature>
<feature type="turn" evidence="21">
    <location>
        <begin position="372"/>
        <end position="378"/>
    </location>
</feature>
<feature type="strand" evidence="22">
    <location>
        <begin position="381"/>
        <end position="383"/>
    </location>
</feature>
<feature type="helix" evidence="21">
    <location>
        <begin position="384"/>
        <end position="387"/>
    </location>
</feature>
<feature type="strand" evidence="20">
    <location>
        <begin position="388"/>
        <end position="390"/>
    </location>
</feature>
<feature type="strand" evidence="16">
    <location>
        <begin position="391"/>
        <end position="393"/>
    </location>
</feature>
<feature type="strand" evidence="21">
    <location>
        <begin position="397"/>
        <end position="401"/>
    </location>
</feature>
<feature type="turn" evidence="16">
    <location>
        <begin position="402"/>
        <end position="404"/>
    </location>
</feature>
<feature type="helix" evidence="21">
    <location>
        <begin position="407"/>
        <end position="422"/>
    </location>
</feature>
<name>AADAT_HUMAN</name>
<proteinExistence type="evidence at protein level"/>
<protein>
    <recommendedName>
        <fullName evidence="10">Kynurenine/alpha-aminoadipate aminotransferase, mitochondrial</fullName>
        <shortName>KAT/AadAT</shortName>
    </recommendedName>
    <alternativeName>
        <fullName>2-aminoadipate aminotransferase</fullName>
    </alternativeName>
    <alternativeName>
        <fullName>2-aminoadipate transaminase</fullName>
        <ecNumber evidence="5 8">2.6.1.39</ecNumber>
    </alternativeName>
    <alternativeName>
        <fullName>Alpha-aminoadipate aminotransferase</fullName>
        <shortName>AadAT</shortName>
    </alternativeName>
    <alternativeName>
        <fullName evidence="10">Glycine transaminase AADAT</fullName>
        <ecNumber evidence="8">2.6.1.4</ecNumber>
    </alternativeName>
    <alternativeName>
        <fullName>Kynurenine aminotransferase II</fullName>
    </alternativeName>
    <alternativeName>
        <fullName evidence="10">Kynurenine--glyoxylate transaminase AADAT</fullName>
        <ecNumber evidence="8">2.6.1.63</ecNumber>
    </alternativeName>
    <alternativeName>
        <fullName>Kynurenine--oxoglutarate aminotransferase II</fullName>
    </alternativeName>
    <alternativeName>
        <fullName>Kynurenine--oxoglutarate transaminase 2</fullName>
        <ecNumber evidence="6 8">2.6.1.7</ecNumber>
    </alternativeName>
    <alternativeName>
        <fullName>Kynurenine--oxoglutarate transaminase II</fullName>
    </alternativeName>
    <alternativeName>
        <fullName evidence="10">Methionine--glyoxylate transaminase AADAT</fullName>
        <ecNumber evidence="8">2.6.1.73</ecNumber>
    </alternativeName>
</protein>
<dbReference type="EC" id="2.6.1.39" evidence="5 8"/>
<dbReference type="EC" id="2.6.1.4" evidence="8"/>
<dbReference type="EC" id="2.6.1.63" evidence="8"/>
<dbReference type="EC" id="2.6.1.7" evidence="6 8"/>
<dbReference type="EC" id="2.6.1.73" evidence="8"/>
<dbReference type="EMBL" id="AF097994">
    <property type="protein sequence ID" value="AAF04623.1"/>
    <property type="molecule type" value="mRNA"/>
</dbReference>
<dbReference type="EMBL" id="AF481738">
    <property type="protein sequence ID" value="AAM09683.1"/>
    <property type="molecule type" value="mRNA"/>
</dbReference>
<dbReference type="EMBL" id="AK055952">
    <property type="protein sequence ID" value="BAG51596.1"/>
    <property type="molecule type" value="mRNA"/>
</dbReference>
<dbReference type="EMBL" id="BC031068">
    <property type="protein sequence ID" value="AAH31068.1"/>
    <property type="molecule type" value="mRNA"/>
</dbReference>
<dbReference type="CCDS" id="CCDS3814.1">
    <molecule id="Q8N5Z0-1"/>
</dbReference>
<dbReference type="CCDS" id="CCDS75209.1">
    <molecule id="Q8N5Z0-2"/>
</dbReference>
<dbReference type="RefSeq" id="NP_001273611.1">
    <molecule id="Q8N5Z0-2"/>
    <property type="nucleotide sequence ID" value="NM_001286682.2"/>
</dbReference>
<dbReference type="RefSeq" id="NP_001273612.1">
    <molecule id="Q8N5Z0-1"/>
    <property type="nucleotide sequence ID" value="NM_001286683.1"/>
</dbReference>
<dbReference type="RefSeq" id="NP_057312.1">
    <molecule id="Q8N5Z0-1"/>
    <property type="nucleotide sequence ID" value="NM_016228.4"/>
</dbReference>
<dbReference type="RefSeq" id="NP_872603.1">
    <molecule id="Q8N5Z0-1"/>
    <property type="nucleotide sequence ID" value="NM_182662.2"/>
</dbReference>
<dbReference type="RefSeq" id="XP_024309845.1">
    <molecule id="Q8N5Z0-1"/>
    <property type="nucleotide sequence ID" value="XM_024454077.2"/>
</dbReference>
<dbReference type="RefSeq" id="XP_047271719.1">
    <molecule id="Q8N5Z0-1"/>
    <property type="nucleotide sequence ID" value="XM_047415763.1"/>
</dbReference>
<dbReference type="RefSeq" id="XP_054206124.1">
    <molecule id="Q8N5Z0-1"/>
    <property type="nucleotide sequence ID" value="XM_054350149.1"/>
</dbReference>
<dbReference type="RefSeq" id="XP_054206125.1">
    <molecule id="Q8N5Z0-1"/>
    <property type="nucleotide sequence ID" value="XM_054350150.1"/>
</dbReference>
<dbReference type="PDB" id="2QLR">
    <property type="method" value="X-ray"/>
    <property type="resolution" value="2.30 A"/>
    <property type="chains" value="A/B/C/D=1-425"/>
</dbReference>
<dbReference type="PDB" id="2R2N">
    <property type="method" value="X-ray"/>
    <property type="resolution" value="1.95 A"/>
    <property type="chains" value="A/B/C/D=1-425"/>
</dbReference>
<dbReference type="PDB" id="2VGZ">
    <property type="method" value="X-ray"/>
    <property type="resolution" value="2.30 A"/>
    <property type="chains" value="A/B=2-425"/>
</dbReference>
<dbReference type="PDB" id="2XH1">
    <property type="method" value="X-ray"/>
    <property type="resolution" value="2.10 A"/>
    <property type="chains" value="A/B=1-425"/>
</dbReference>
<dbReference type="PDB" id="3DC1">
    <property type="method" value="X-ray"/>
    <property type="resolution" value="2.50 A"/>
    <property type="chains" value="A/B/C/D=1-425"/>
</dbReference>
<dbReference type="PDB" id="3UE8">
    <property type="method" value="X-ray"/>
    <property type="resolution" value="3.22 A"/>
    <property type="chains" value="A/B=1-425"/>
</dbReference>
<dbReference type="PDB" id="4GDY">
    <property type="method" value="X-ray"/>
    <property type="resolution" value="2.89 A"/>
    <property type="chains" value="A/B=1-425"/>
</dbReference>
<dbReference type="PDB" id="4GE4">
    <property type="method" value="X-ray"/>
    <property type="resolution" value="2.41 A"/>
    <property type="chains" value="A/B=1-425"/>
</dbReference>
<dbReference type="PDB" id="4GE7">
    <property type="method" value="X-ray"/>
    <property type="resolution" value="2.10 A"/>
    <property type="chains" value="A/B=1-425"/>
</dbReference>
<dbReference type="PDB" id="4GE9">
    <property type="method" value="X-ray"/>
    <property type="resolution" value="2.43 A"/>
    <property type="chains" value="A/B/C/D=1-425"/>
</dbReference>
<dbReference type="PDB" id="4GEB">
    <property type="method" value="X-ray"/>
    <property type="resolution" value="2.15 A"/>
    <property type="chains" value="A/B=1-425"/>
</dbReference>
<dbReference type="PDB" id="5EFS">
    <property type="method" value="X-ray"/>
    <property type="resolution" value="1.83 A"/>
    <property type="chains" value="A=1-425"/>
</dbReference>
<dbReference type="PDB" id="5EUN">
    <property type="method" value="X-ray"/>
    <property type="resolution" value="1.82 A"/>
    <property type="chains" value="A=1-425"/>
</dbReference>
<dbReference type="PDB" id="5TF5">
    <property type="method" value="X-ray"/>
    <property type="resolution" value="1.81 A"/>
    <property type="chains" value="A/B=1-425"/>
</dbReference>
<dbReference type="PDB" id="6D0A">
    <property type="method" value="X-ray"/>
    <property type="resolution" value="1.47 A"/>
    <property type="chains" value="A=1-425"/>
</dbReference>
<dbReference type="PDB" id="6T8P">
    <property type="method" value="X-ray"/>
    <property type="resolution" value="2.02 A"/>
    <property type="chains" value="A/B=1-425"/>
</dbReference>
<dbReference type="PDB" id="6T8Q">
    <property type="method" value="X-ray"/>
    <property type="resolution" value="2.51 A"/>
    <property type="chains" value="A=1-425"/>
</dbReference>
<dbReference type="PDBsum" id="2QLR"/>
<dbReference type="PDBsum" id="2R2N"/>
<dbReference type="PDBsum" id="2VGZ"/>
<dbReference type="PDBsum" id="2XH1"/>
<dbReference type="PDBsum" id="3DC1"/>
<dbReference type="PDBsum" id="3UE8"/>
<dbReference type="PDBsum" id="4GDY"/>
<dbReference type="PDBsum" id="4GE4"/>
<dbReference type="PDBsum" id="4GE7"/>
<dbReference type="PDBsum" id="4GE9"/>
<dbReference type="PDBsum" id="4GEB"/>
<dbReference type="PDBsum" id="5EFS"/>
<dbReference type="PDBsum" id="5EUN"/>
<dbReference type="PDBsum" id="5TF5"/>
<dbReference type="PDBsum" id="6D0A"/>
<dbReference type="PDBsum" id="6T8P"/>
<dbReference type="PDBsum" id="6T8Q"/>
<dbReference type="SMR" id="Q8N5Z0"/>
<dbReference type="BioGRID" id="119346">
    <property type="interactions" value="22"/>
</dbReference>
<dbReference type="FunCoup" id="Q8N5Z0">
    <property type="interactions" value="368"/>
</dbReference>
<dbReference type="IntAct" id="Q8N5Z0">
    <property type="interactions" value="1"/>
</dbReference>
<dbReference type="STRING" id="9606.ENSP00000423190"/>
<dbReference type="BindingDB" id="Q8N5Z0"/>
<dbReference type="ChEMBL" id="CHEMBL2046259"/>
<dbReference type="DrugBank" id="DB00142">
    <property type="generic name" value="Glutamic acid"/>
</dbReference>
<dbReference type="DrugBank" id="DB00114">
    <property type="generic name" value="Pyridoxal phosphate"/>
</dbReference>
<dbReference type="GlyGen" id="Q8N5Z0">
    <property type="glycosylation" value="1 site, 1 O-linked glycan (1 site)"/>
</dbReference>
<dbReference type="iPTMnet" id="Q8N5Z0"/>
<dbReference type="PhosphoSitePlus" id="Q8N5Z0"/>
<dbReference type="SwissPalm" id="Q8N5Z0"/>
<dbReference type="BioMuta" id="AADAT"/>
<dbReference type="DMDM" id="46395904"/>
<dbReference type="jPOST" id="Q8N5Z0"/>
<dbReference type="MassIVE" id="Q8N5Z0"/>
<dbReference type="PaxDb" id="9606-ENSP00000423190"/>
<dbReference type="PeptideAtlas" id="Q8N5Z0"/>
<dbReference type="ProteomicsDB" id="72114">
    <molecule id="Q8N5Z0-1"/>
</dbReference>
<dbReference type="ProteomicsDB" id="72115">
    <molecule id="Q8N5Z0-2"/>
</dbReference>
<dbReference type="Pumba" id="Q8N5Z0"/>
<dbReference type="Antibodypedia" id="17143">
    <property type="antibodies" value="326 antibodies from 34 providers"/>
</dbReference>
<dbReference type="DNASU" id="51166"/>
<dbReference type="Ensembl" id="ENST00000337664.9">
    <molecule id="Q8N5Z0-1"/>
    <property type="protein sequence ID" value="ENSP00000336808.4"/>
    <property type="gene ID" value="ENSG00000109576.14"/>
</dbReference>
<dbReference type="Ensembl" id="ENST00000353187.6">
    <molecule id="Q8N5Z0-1"/>
    <property type="protein sequence ID" value="ENSP00000226840.4"/>
    <property type="gene ID" value="ENSG00000109576.14"/>
</dbReference>
<dbReference type="Ensembl" id="ENST00000509167.5">
    <molecule id="Q8N5Z0-2"/>
    <property type="protein sequence ID" value="ENSP00000423190.1"/>
    <property type="gene ID" value="ENSG00000109576.14"/>
</dbReference>
<dbReference type="Ensembl" id="ENST00000515480.5">
    <molecule id="Q8N5Z0-1"/>
    <property type="protein sequence ID" value="ENSP00000423341.1"/>
    <property type="gene ID" value="ENSG00000109576.14"/>
</dbReference>
<dbReference type="GeneID" id="51166"/>
<dbReference type="KEGG" id="hsa:51166"/>
<dbReference type="MANE-Select" id="ENST00000337664.9">
    <property type="protein sequence ID" value="ENSP00000336808.4"/>
    <property type="RefSeq nucleotide sequence ID" value="NM_016228.4"/>
    <property type="RefSeq protein sequence ID" value="NP_057312.1"/>
</dbReference>
<dbReference type="UCSC" id="uc003isr.4">
    <molecule id="Q8N5Z0-1"/>
    <property type="organism name" value="human"/>
</dbReference>
<dbReference type="AGR" id="HGNC:17929"/>
<dbReference type="CTD" id="51166"/>
<dbReference type="DisGeNET" id="51166"/>
<dbReference type="GeneCards" id="AADAT"/>
<dbReference type="HGNC" id="HGNC:17929">
    <property type="gene designation" value="AADAT"/>
</dbReference>
<dbReference type="HPA" id="ENSG00000109576">
    <property type="expression patterns" value="Tissue enhanced (liver)"/>
</dbReference>
<dbReference type="MIM" id="611754">
    <property type="type" value="gene"/>
</dbReference>
<dbReference type="neXtProt" id="NX_Q8N5Z0"/>
<dbReference type="OpenTargets" id="ENSG00000109576"/>
<dbReference type="PharmGKB" id="PA24364"/>
<dbReference type="VEuPathDB" id="HostDB:ENSG00000109576"/>
<dbReference type="eggNOG" id="KOG0634">
    <property type="taxonomic scope" value="Eukaryota"/>
</dbReference>
<dbReference type="GeneTree" id="ENSGT00390000004594"/>
<dbReference type="HOGENOM" id="CLU_017584_0_6_1"/>
<dbReference type="InParanoid" id="Q8N5Z0"/>
<dbReference type="OMA" id="FMPGEPF"/>
<dbReference type="OrthoDB" id="691673at2759"/>
<dbReference type="PAN-GO" id="Q8N5Z0">
    <property type="GO annotations" value="2 GO annotations based on evolutionary models"/>
</dbReference>
<dbReference type="PhylomeDB" id="Q8N5Z0"/>
<dbReference type="TreeFam" id="TF328598"/>
<dbReference type="BioCyc" id="MetaCyc:HS03239-MONOMER"/>
<dbReference type="BRENDA" id="2.6.1.39">
    <property type="organism ID" value="2681"/>
</dbReference>
<dbReference type="BRENDA" id="2.6.1.7">
    <property type="organism ID" value="2681"/>
</dbReference>
<dbReference type="PathwayCommons" id="Q8N5Z0"/>
<dbReference type="Reactome" id="R-HSA-71064">
    <property type="pathway name" value="Lysine catabolism"/>
</dbReference>
<dbReference type="Reactome" id="R-HSA-71240">
    <property type="pathway name" value="Tryptophan catabolism"/>
</dbReference>
<dbReference type="SABIO-RK" id="Q8N5Z0"/>
<dbReference type="SignaLink" id="Q8N5Z0"/>
<dbReference type="UniPathway" id="UPA00868">
    <property type="reaction ID" value="UER00838"/>
</dbReference>
<dbReference type="BioGRID-ORCS" id="51166">
    <property type="hits" value="24 hits in 1155 CRISPR screens"/>
</dbReference>
<dbReference type="ChiTaRS" id="AADAT">
    <property type="organism name" value="human"/>
</dbReference>
<dbReference type="EvolutionaryTrace" id="Q8N5Z0"/>
<dbReference type="GenomeRNAi" id="51166"/>
<dbReference type="Pharos" id="Q8N5Z0">
    <property type="development level" value="Tchem"/>
</dbReference>
<dbReference type="PRO" id="PR:Q8N5Z0"/>
<dbReference type="Proteomes" id="UP000005640">
    <property type="component" value="Chromosome 4"/>
</dbReference>
<dbReference type="RNAct" id="Q8N5Z0">
    <property type="molecule type" value="protein"/>
</dbReference>
<dbReference type="Bgee" id="ENSG00000109576">
    <property type="expression patterns" value="Expressed in right lobe of liver and 143 other cell types or tissues"/>
</dbReference>
<dbReference type="ExpressionAtlas" id="Q8N5Z0">
    <property type="expression patterns" value="baseline and differential"/>
</dbReference>
<dbReference type="GO" id="GO:0005759">
    <property type="term" value="C:mitochondrial matrix"/>
    <property type="evidence" value="ECO:0000304"/>
    <property type="project" value="Reactome"/>
</dbReference>
<dbReference type="GO" id="GO:0005739">
    <property type="term" value="C:mitochondrion"/>
    <property type="evidence" value="ECO:0006056"/>
    <property type="project" value="FlyBase"/>
</dbReference>
<dbReference type="GO" id="GO:0047536">
    <property type="term" value="F:2-aminoadipate transaminase activity"/>
    <property type="evidence" value="ECO:0000314"/>
    <property type="project" value="UniProtKB"/>
</dbReference>
<dbReference type="GO" id="GO:0047958">
    <property type="term" value="F:glycine:2-oxoglutarate aminotransferase activity"/>
    <property type="evidence" value="ECO:0000314"/>
    <property type="project" value="UniProtKB"/>
</dbReference>
<dbReference type="GO" id="GO:0047315">
    <property type="term" value="F:kynurenine-glyoxylate transaminase activity"/>
    <property type="evidence" value="ECO:0000314"/>
    <property type="project" value="UniProtKB"/>
</dbReference>
<dbReference type="GO" id="GO:0016212">
    <property type="term" value="F:kynurenine-oxoglutarate transaminase activity"/>
    <property type="evidence" value="ECO:0000314"/>
    <property type="project" value="UniProtKB"/>
</dbReference>
<dbReference type="GO" id="GO:0050094">
    <property type="term" value="F:methionine-glyoxylate transaminase activity"/>
    <property type="evidence" value="ECO:0000314"/>
    <property type="project" value="UniProtKB"/>
</dbReference>
<dbReference type="GO" id="GO:0042803">
    <property type="term" value="F:protein homodimerization activity"/>
    <property type="evidence" value="ECO:0000353"/>
    <property type="project" value="UniProtKB"/>
</dbReference>
<dbReference type="GO" id="GO:0030170">
    <property type="term" value="F:pyridoxal phosphate binding"/>
    <property type="evidence" value="ECO:0007669"/>
    <property type="project" value="InterPro"/>
</dbReference>
<dbReference type="GO" id="GO:0006103">
    <property type="term" value="P:2-oxoglutarate metabolic process"/>
    <property type="evidence" value="ECO:0000314"/>
    <property type="project" value="UniProtKB"/>
</dbReference>
<dbReference type="GO" id="GO:1901605">
    <property type="term" value="P:alpha-amino acid metabolic process"/>
    <property type="evidence" value="ECO:0000318"/>
    <property type="project" value="GO_Central"/>
</dbReference>
<dbReference type="GO" id="GO:0009058">
    <property type="term" value="P:biosynthetic process"/>
    <property type="evidence" value="ECO:0007669"/>
    <property type="project" value="InterPro"/>
</dbReference>
<dbReference type="GO" id="GO:0006536">
    <property type="term" value="P:glutamate metabolic process"/>
    <property type="evidence" value="ECO:0000314"/>
    <property type="project" value="UniProtKB"/>
</dbReference>
<dbReference type="GO" id="GO:0070189">
    <property type="term" value="P:kynurenine metabolic process"/>
    <property type="evidence" value="ECO:0000314"/>
    <property type="project" value="UniProtKB"/>
</dbReference>
<dbReference type="GO" id="GO:0033512">
    <property type="term" value="P:L-lysine catabolic process to acetyl-CoA via saccharopine"/>
    <property type="evidence" value="ECO:0007669"/>
    <property type="project" value="UniProtKB-UniPathway"/>
</dbReference>
<dbReference type="CDD" id="cd00609">
    <property type="entry name" value="AAT_like"/>
    <property type="match status" value="1"/>
</dbReference>
<dbReference type="FunFam" id="3.40.640.10:FF:000071">
    <property type="entry name" value="Kynurenine/alpha-aminoadipate aminotransferase, mitochondrial"/>
    <property type="match status" value="1"/>
</dbReference>
<dbReference type="FunFam" id="3.90.1150.10:FF:000166">
    <property type="entry name" value="Kynurenine/alpha-aminoadipate aminotransferase, mitochondrial"/>
    <property type="match status" value="1"/>
</dbReference>
<dbReference type="Gene3D" id="3.40.640.10">
    <property type="entry name" value="Type I PLP-dependent aspartate aminotransferase-like (Major domain)"/>
    <property type="match status" value="1"/>
</dbReference>
<dbReference type="InterPro" id="IPR004839">
    <property type="entry name" value="Aminotransferase_I/II_large"/>
</dbReference>
<dbReference type="InterPro" id="IPR050859">
    <property type="entry name" value="Class-I_PLP-dep_aminotransf"/>
</dbReference>
<dbReference type="InterPro" id="IPR015424">
    <property type="entry name" value="PyrdxlP-dep_Trfase"/>
</dbReference>
<dbReference type="InterPro" id="IPR015421">
    <property type="entry name" value="PyrdxlP-dep_Trfase_major"/>
</dbReference>
<dbReference type="PANTHER" id="PTHR42790">
    <property type="entry name" value="AMINOTRANSFERASE"/>
    <property type="match status" value="1"/>
</dbReference>
<dbReference type="PANTHER" id="PTHR42790:SF19">
    <property type="entry name" value="KYNURENINE_ALPHA-AMINOADIPATE AMINOTRANSFERASE, MITOCHONDRIAL"/>
    <property type="match status" value="1"/>
</dbReference>
<dbReference type="Pfam" id="PF00155">
    <property type="entry name" value="Aminotran_1_2"/>
    <property type="match status" value="1"/>
</dbReference>
<dbReference type="SUPFAM" id="SSF53383">
    <property type="entry name" value="PLP-dependent transferases"/>
    <property type="match status" value="1"/>
</dbReference>